<feature type="chain" id="PRO_0000335189" description="DNA mismatch repair protein MutS">
    <location>
        <begin position="1"/>
        <end position="889"/>
    </location>
</feature>
<feature type="binding site" evidence="1">
    <location>
        <begin position="641"/>
        <end position="648"/>
    </location>
    <ligand>
        <name>ATP</name>
        <dbReference type="ChEBI" id="CHEBI:30616"/>
    </ligand>
</feature>
<protein>
    <recommendedName>
        <fullName evidence="1">DNA mismatch repair protein MutS</fullName>
    </recommendedName>
</protein>
<organism>
    <name type="scientific">Orientia tsutsugamushi (strain Boryong)</name>
    <name type="common">Rickettsia tsutsugamushi</name>
    <dbReference type="NCBI Taxonomy" id="357244"/>
    <lineage>
        <taxon>Bacteria</taxon>
        <taxon>Pseudomonadati</taxon>
        <taxon>Pseudomonadota</taxon>
        <taxon>Alphaproteobacteria</taxon>
        <taxon>Rickettsiales</taxon>
        <taxon>Rickettsiaceae</taxon>
        <taxon>Rickettsieae</taxon>
        <taxon>Orientia</taxon>
    </lineage>
</organism>
<keyword id="KW-0067">ATP-binding</keyword>
<keyword id="KW-0227">DNA damage</keyword>
<keyword id="KW-0234">DNA repair</keyword>
<keyword id="KW-0238">DNA-binding</keyword>
<keyword id="KW-0547">Nucleotide-binding</keyword>
<keyword id="KW-1185">Reference proteome</keyword>
<sequence>MLTKEDFRNKYQYHQATPMLQQYLDIKFTHQCCILLFRVGDFYELFFDDAIVVSKLLGLILAKKGKHAGQDLPMCGIPYHALESYLPRLVEQEHKVALCEQLESPEEAKKRNGYKAVVKREVVRIITSGTITEESLIKANVPNYLAAIVIHKDIASIGYCDVSTAEFIVIDVAIHNLTSELSRINPKEIILSESLQHNSGLLALFDNYKQKIVYQVESYFSFNKAQRVIQNYYEIITIDSIGSLNSTQVSAVGAILEYLSIMQKHSKSKLPFPQIVSYENFMLIDASARKNLELTSTLSGNFKGSLLSIIDATVTNQGGRLLHKFLSTPLAEVNLINSRLQITDFFYQNLQLVENLRQLVKLVPDIERALSRILIAKALPKDLESIKISLKIALSIKKELNKVLEEGNTPKYLEEIYNPLFGDNELYELLDSALLDDLSNSANDCGFIKSSYSTKLEELRNLIHNSSNFIEQLKLQYRQETCIETLKICHNNVWGMFIEVSSKNAHKITDSKFVHKQTTTTAVRFTTTELQTLEAKMLNAKTMAAALEQEILAELCKAISLKSEKLSHLAKSISLIDVFCNFAYISHEYNYCRPEITSDLAFNIVDGRHAVIEKLITKKHESFISNDCNLQNDQRIWLITGPNMAGKSTFLRQNAIIVILAQIGCYVPAQSAQIGVVDKLFSRIGAADDLASGQSTFMVEMVETSVILAQSTFMSLVILDEIGRGTSTYDGISIAWSCLEYIHSNIRCRCLFATHYHELVDLASKLLSLKNFTVKIHDSNDKLSFLYKIIEGAANKSYGIHVAELAGLPRIVLNRAKEILLELEHNKVNINQSNNNITKSIDIAVPPYPVKTIEIIKQLNPDQLTPKEALSIIYKIKNTILLEEDEKMI</sequence>
<name>MUTS_ORITB</name>
<gene>
    <name evidence="1" type="primary">mutS</name>
    <name type="ordered locus">OTBS_1034</name>
</gene>
<evidence type="ECO:0000255" key="1">
    <source>
        <dbReference type="HAMAP-Rule" id="MF_00096"/>
    </source>
</evidence>
<comment type="function">
    <text evidence="1">This protein is involved in the repair of mismatches in DNA. It is possible that it carries out the mismatch recognition step. This protein has a weak ATPase activity.</text>
</comment>
<comment type="similarity">
    <text evidence="1">Belongs to the DNA mismatch repair MutS family.</text>
</comment>
<accession>A5CDU2</accession>
<proteinExistence type="inferred from homology"/>
<reference key="1">
    <citation type="journal article" date="2007" name="Proc. Natl. Acad. Sci. U.S.A.">
        <title>The Orientia tsutsugamushi genome reveals massive proliferation of conjugative type IV secretion system and host-cell interaction genes.</title>
        <authorList>
            <person name="Cho N.-H."/>
            <person name="Kim H.-R."/>
            <person name="Lee J.-H."/>
            <person name="Kim S.-Y."/>
            <person name="Kim J."/>
            <person name="Cha S."/>
            <person name="Kim S.-Y."/>
            <person name="Darby A.C."/>
            <person name="Fuxelius H.-H."/>
            <person name="Yin J."/>
            <person name="Kim J.H."/>
            <person name="Kim J."/>
            <person name="Lee S.J."/>
            <person name="Koh Y.-S."/>
            <person name="Jang W.-J."/>
            <person name="Park K.-H."/>
            <person name="Andersson S.G.E."/>
            <person name="Choi M.-S."/>
            <person name="Kim I.-S."/>
        </authorList>
    </citation>
    <scope>NUCLEOTIDE SEQUENCE [LARGE SCALE GENOMIC DNA]</scope>
    <source>
        <strain>Boryong</strain>
    </source>
</reference>
<dbReference type="EMBL" id="AM494475">
    <property type="protein sequence ID" value="CAM80100.1"/>
    <property type="molecule type" value="Genomic_DNA"/>
</dbReference>
<dbReference type="RefSeq" id="WP_011944749.1">
    <property type="nucleotide sequence ID" value="NC_009488.1"/>
</dbReference>
<dbReference type="SMR" id="A5CDU2"/>
<dbReference type="KEGG" id="ots:OTBS_1034"/>
<dbReference type="eggNOG" id="COG0249">
    <property type="taxonomic scope" value="Bacteria"/>
</dbReference>
<dbReference type="HOGENOM" id="CLU_002472_4_0_5"/>
<dbReference type="Proteomes" id="UP000001565">
    <property type="component" value="Chromosome"/>
</dbReference>
<dbReference type="GO" id="GO:0005524">
    <property type="term" value="F:ATP binding"/>
    <property type="evidence" value="ECO:0007669"/>
    <property type="project" value="UniProtKB-UniRule"/>
</dbReference>
<dbReference type="GO" id="GO:0140664">
    <property type="term" value="F:ATP-dependent DNA damage sensor activity"/>
    <property type="evidence" value="ECO:0007669"/>
    <property type="project" value="InterPro"/>
</dbReference>
<dbReference type="GO" id="GO:0003684">
    <property type="term" value="F:damaged DNA binding"/>
    <property type="evidence" value="ECO:0007669"/>
    <property type="project" value="UniProtKB-UniRule"/>
</dbReference>
<dbReference type="GO" id="GO:0030983">
    <property type="term" value="F:mismatched DNA binding"/>
    <property type="evidence" value="ECO:0007669"/>
    <property type="project" value="InterPro"/>
</dbReference>
<dbReference type="GO" id="GO:0006298">
    <property type="term" value="P:mismatch repair"/>
    <property type="evidence" value="ECO:0007669"/>
    <property type="project" value="UniProtKB-UniRule"/>
</dbReference>
<dbReference type="CDD" id="cd03284">
    <property type="entry name" value="ABC_MutS1"/>
    <property type="match status" value="1"/>
</dbReference>
<dbReference type="FunFam" id="3.40.1170.10:FF:000001">
    <property type="entry name" value="DNA mismatch repair protein MutS"/>
    <property type="match status" value="1"/>
</dbReference>
<dbReference type="FunFam" id="3.40.50.300:FF:000870">
    <property type="entry name" value="MutS protein homolog 4"/>
    <property type="match status" value="1"/>
</dbReference>
<dbReference type="Gene3D" id="1.10.1420.10">
    <property type="match status" value="2"/>
</dbReference>
<dbReference type="Gene3D" id="6.10.140.430">
    <property type="match status" value="1"/>
</dbReference>
<dbReference type="Gene3D" id="3.40.1170.10">
    <property type="entry name" value="DNA repair protein MutS, domain I"/>
    <property type="match status" value="1"/>
</dbReference>
<dbReference type="Gene3D" id="3.30.420.110">
    <property type="entry name" value="MutS, connector domain"/>
    <property type="match status" value="1"/>
</dbReference>
<dbReference type="Gene3D" id="3.40.50.300">
    <property type="entry name" value="P-loop containing nucleotide triphosphate hydrolases"/>
    <property type="match status" value="1"/>
</dbReference>
<dbReference type="HAMAP" id="MF_00096">
    <property type="entry name" value="MutS"/>
    <property type="match status" value="1"/>
</dbReference>
<dbReference type="InterPro" id="IPR005748">
    <property type="entry name" value="DNA_mismatch_repair_MutS"/>
</dbReference>
<dbReference type="InterPro" id="IPR007695">
    <property type="entry name" value="DNA_mismatch_repair_MutS-lik_N"/>
</dbReference>
<dbReference type="InterPro" id="IPR017261">
    <property type="entry name" value="DNA_mismatch_repair_MutS/MSH"/>
</dbReference>
<dbReference type="InterPro" id="IPR000432">
    <property type="entry name" value="DNA_mismatch_repair_MutS_C"/>
</dbReference>
<dbReference type="InterPro" id="IPR007861">
    <property type="entry name" value="DNA_mismatch_repair_MutS_clamp"/>
</dbReference>
<dbReference type="InterPro" id="IPR007696">
    <property type="entry name" value="DNA_mismatch_repair_MutS_core"/>
</dbReference>
<dbReference type="InterPro" id="IPR016151">
    <property type="entry name" value="DNA_mismatch_repair_MutS_N"/>
</dbReference>
<dbReference type="InterPro" id="IPR036187">
    <property type="entry name" value="DNA_mismatch_repair_MutS_sf"/>
</dbReference>
<dbReference type="InterPro" id="IPR007860">
    <property type="entry name" value="DNA_mmatch_repair_MutS_con_dom"/>
</dbReference>
<dbReference type="InterPro" id="IPR045076">
    <property type="entry name" value="MutS"/>
</dbReference>
<dbReference type="InterPro" id="IPR036678">
    <property type="entry name" value="MutS_con_dom_sf"/>
</dbReference>
<dbReference type="InterPro" id="IPR027417">
    <property type="entry name" value="P-loop_NTPase"/>
</dbReference>
<dbReference type="NCBIfam" id="TIGR01070">
    <property type="entry name" value="mutS1"/>
    <property type="match status" value="1"/>
</dbReference>
<dbReference type="NCBIfam" id="NF003810">
    <property type="entry name" value="PRK05399.1"/>
    <property type="match status" value="1"/>
</dbReference>
<dbReference type="PANTHER" id="PTHR11361:SF34">
    <property type="entry name" value="DNA MISMATCH REPAIR PROTEIN MSH1, MITOCHONDRIAL"/>
    <property type="match status" value="1"/>
</dbReference>
<dbReference type="PANTHER" id="PTHR11361">
    <property type="entry name" value="DNA MISMATCH REPAIR PROTEIN MUTS FAMILY MEMBER"/>
    <property type="match status" value="1"/>
</dbReference>
<dbReference type="Pfam" id="PF01624">
    <property type="entry name" value="MutS_I"/>
    <property type="match status" value="1"/>
</dbReference>
<dbReference type="Pfam" id="PF05188">
    <property type="entry name" value="MutS_II"/>
    <property type="match status" value="1"/>
</dbReference>
<dbReference type="Pfam" id="PF05192">
    <property type="entry name" value="MutS_III"/>
    <property type="match status" value="1"/>
</dbReference>
<dbReference type="Pfam" id="PF05190">
    <property type="entry name" value="MutS_IV"/>
    <property type="match status" value="1"/>
</dbReference>
<dbReference type="Pfam" id="PF00488">
    <property type="entry name" value="MutS_V"/>
    <property type="match status" value="1"/>
</dbReference>
<dbReference type="PIRSF" id="PIRSF037677">
    <property type="entry name" value="DNA_mis_repair_Msh6"/>
    <property type="match status" value="1"/>
</dbReference>
<dbReference type="SMART" id="SM00534">
    <property type="entry name" value="MUTSac"/>
    <property type="match status" value="1"/>
</dbReference>
<dbReference type="SMART" id="SM00533">
    <property type="entry name" value="MUTSd"/>
    <property type="match status" value="1"/>
</dbReference>
<dbReference type="SUPFAM" id="SSF55271">
    <property type="entry name" value="DNA repair protein MutS, domain I"/>
    <property type="match status" value="1"/>
</dbReference>
<dbReference type="SUPFAM" id="SSF53150">
    <property type="entry name" value="DNA repair protein MutS, domain II"/>
    <property type="match status" value="1"/>
</dbReference>
<dbReference type="SUPFAM" id="SSF48334">
    <property type="entry name" value="DNA repair protein MutS, domain III"/>
    <property type="match status" value="1"/>
</dbReference>
<dbReference type="SUPFAM" id="SSF52540">
    <property type="entry name" value="P-loop containing nucleoside triphosphate hydrolases"/>
    <property type="match status" value="1"/>
</dbReference>
<dbReference type="PROSITE" id="PS00486">
    <property type="entry name" value="DNA_MISMATCH_REPAIR_2"/>
    <property type="match status" value="1"/>
</dbReference>